<accession>A7HFV9</accession>
<name>CLPP_ANADF</name>
<protein>
    <recommendedName>
        <fullName evidence="1">ATP-dependent Clp protease proteolytic subunit</fullName>
        <ecNumber evidence="1">3.4.21.92</ecNumber>
    </recommendedName>
    <alternativeName>
        <fullName evidence="1">Endopeptidase Clp</fullName>
    </alternativeName>
</protein>
<gene>
    <name evidence="1" type="primary">clpP</name>
    <name type="ordered locus">Anae109_3421</name>
</gene>
<sequence>MPYIPMPYVVEQTHRGERSYDIYSRLLKDRIVFLGTPIDDDVANVVIAQLLFLESEDPDKDISLYINSPGGSVTSGLAIYDTMQYVKPQVSTICLGQAASMGAFLLAGGAAGKRFAVPNARIMIHQPMGGFQGQATDIDIQAREILRLKAKLNDILAKHTKQPLERIEKDTDRDYFMGAGEAKEYGLIDEVIVHKPKATEKKAQ</sequence>
<feature type="chain" id="PRO_1000026062" description="ATP-dependent Clp protease proteolytic subunit">
    <location>
        <begin position="1"/>
        <end position="204"/>
    </location>
</feature>
<feature type="active site" description="Nucleophile" evidence="1">
    <location>
        <position position="100"/>
    </location>
</feature>
<feature type="active site" evidence="1">
    <location>
        <position position="125"/>
    </location>
</feature>
<proteinExistence type="inferred from homology"/>
<dbReference type="EC" id="3.4.21.92" evidence="1"/>
<dbReference type="EMBL" id="CP000769">
    <property type="protein sequence ID" value="ABS27605.1"/>
    <property type="molecule type" value="Genomic_DNA"/>
</dbReference>
<dbReference type="RefSeq" id="WP_012098225.1">
    <property type="nucleotide sequence ID" value="NC_009675.1"/>
</dbReference>
<dbReference type="SMR" id="A7HFV9"/>
<dbReference type="STRING" id="404589.Anae109_3421"/>
<dbReference type="MEROPS" id="S14.001"/>
<dbReference type="KEGG" id="afw:Anae109_3421"/>
<dbReference type="eggNOG" id="COG0740">
    <property type="taxonomic scope" value="Bacteria"/>
</dbReference>
<dbReference type="HOGENOM" id="CLU_058707_3_2_7"/>
<dbReference type="OrthoDB" id="9802800at2"/>
<dbReference type="Proteomes" id="UP000006382">
    <property type="component" value="Chromosome"/>
</dbReference>
<dbReference type="GO" id="GO:0005737">
    <property type="term" value="C:cytoplasm"/>
    <property type="evidence" value="ECO:0007669"/>
    <property type="project" value="UniProtKB-SubCell"/>
</dbReference>
<dbReference type="GO" id="GO:0009368">
    <property type="term" value="C:endopeptidase Clp complex"/>
    <property type="evidence" value="ECO:0007669"/>
    <property type="project" value="TreeGrafter"/>
</dbReference>
<dbReference type="GO" id="GO:0004176">
    <property type="term" value="F:ATP-dependent peptidase activity"/>
    <property type="evidence" value="ECO:0007669"/>
    <property type="project" value="InterPro"/>
</dbReference>
<dbReference type="GO" id="GO:0051117">
    <property type="term" value="F:ATPase binding"/>
    <property type="evidence" value="ECO:0007669"/>
    <property type="project" value="TreeGrafter"/>
</dbReference>
<dbReference type="GO" id="GO:0004252">
    <property type="term" value="F:serine-type endopeptidase activity"/>
    <property type="evidence" value="ECO:0007669"/>
    <property type="project" value="UniProtKB-UniRule"/>
</dbReference>
<dbReference type="GO" id="GO:0006515">
    <property type="term" value="P:protein quality control for misfolded or incompletely synthesized proteins"/>
    <property type="evidence" value="ECO:0007669"/>
    <property type="project" value="TreeGrafter"/>
</dbReference>
<dbReference type="CDD" id="cd07017">
    <property type="entry name" value="S14_ClpP_2"/>
    <property type="match status" value="1"/>
</dbReference>
<dbReference type="FunFam" id="3.90.226.10:FF:000001">
    <property type="entry name" value="ATP-dependent Clp protease proteolytic subunit"/>
    <property type="match status" value="1"/>
</dbReference>
<dbReference type="Gene3D" id="3.90.226.10">
    <property type="entry name" value="2-enoyl-CoA Hydratase, Chain A, domain 1"/>
    <property type="match status" value="1"/>
</dbReference>
<dbReference type="HAMAP" id="MF_00444">
    <property type="entry name" value="ClpP"/>
    <property type="match status" value="1"/>
</dbReference>
<dbReference type="InterPro" id="IPR001907">
    <property type="entry name" value="ClpP"/>
</dbReference>
<dbReference type="InterPro" id="IPR029045">
    <property type="entry name" value="ClpP/crotonase-like_dom_sf"/>
</dbReference>
<dbReference type="InterPro" id="IPR023562">
    <property type="entry name" value="ClpP/TepA"/>
</dbReference>
<dbReference type="InterPro" id="IPR033135">
    <property type="entry name" value="ClpP_His_AS"/>
</dbReference>
<dbReference type="InterPro" id="IPR018215">
    <property type="entry name" value="ClpP_Ser_AS"/>
</dbReference>
<dbReference type="NCBIfam" id="TIGR00493">
    <property type="entry name" value="clpP"/>
    <property type="match status" value="1"/>
</dbReference>
<dbReference type="NCBIfam" id="NF001368">
    <property type="entry name" value="PRK00277.1"/>
    <property type="match status" value="1"/>
</dbReference>
<dbReference type="NCBIfam" id="NF009205">
    <property type="entry name" value="PRK12553.1"/>
    <property type="match status" value="1"/>
</dbReference>
<dbReference type="PANTHER" id="PTHR10381">
    <property type="entry name" value="ATP-DEPENDENT CLP PROTEASE PROTEOLYTIC SUBUNIT"/>
    <property type="match status" value="1"/>
</dbReference>
<dbReference type="PANTHER" id="PTHR10381:SF70">
    <property type="entry name" value="ATP-DEPENDENT CLP PROTEASE PROTEOLYTIC SUBUNIT"/>
    <property type="match status" value="1"/>
</dbReference>
<dbReference type="Pfam" id="PF00574">
    <property type="entry name" value="CLP_protease"/>
    <property type="match status" value="1"/>
</dbReference>
<dbReference type="PRINTS" id="PR00127">
    <property type="entry name" value="CLPPROTEASEP"/>
</dbReference>
<dbReference type="SUPFAM" id="SSF52096">
    <property type="entry name" value="ClpP/crotonase"/>
    <property type="match status" value="1"/>
</dbReference>
<dbReference type="PROSITE" id="PS00382">
    <property type="entry name" value="CLP_PROTEASE_HIS"/>
    <property type="match status" value="1"/>
</dbReference>
<dbReference type="PROSITE" id="PS00381">
    <property type="entry name" value="CLP_PROTEASE_SER"/>
    <property type="match status" value="1"/>
</dbReference>
<organism>
    <name type="scientific">Anaeromyxobacter sp. (strain Fw109-5)</name>
    <dbReference type="NCBI Taxonomy" id="404589"/>
    <lineage>
        <taxon>Bacteria</taxon>
        <taxon>Pseudomonadati</taxon>
        <taxon>Myxococcota</taxon>
        <taxon>Myxococcia</taxon>
        <taxon>Myxococcales</taxon>
        <taxon>Cystobacterineae</taxon>
        <taxon>Anaeromyxobacteraceae</taxon>
        <taxon>Anaeromyxobacter</taxon>
    </lineage>
</organism>
<evidence type="ECO:0000255" key="1">
    <source>
        <dbReference type="HAMAP-Rule" id="MF_00444"/>
    </source>
</evidence>
<keyword id="KW-0963">Cytoplasm</keyword>
<keyword id="KW-0378">Hydrolase</keyword>
<keyword id="KW-0645">Protease</keyword>
<keyword id="KW-1185">Reference proteome</keyword>
<keyword id="KW-0720">Serine protease</keyword>
<comment type="function">
    <text evidence="1">Cleaves peptides in various proteins in a process that requires ATP hydrolysis. Has a chymotrypsin-like activity. Plays a major role in the degradation of misfolded proteins.</text>
</comment>
<comment type="catalytic activity">
    <reaction evidence="1">
        <text>Hydrolysis of proteins to small peptides in the presence of ATP and magnesium. alpha-casein is the usual test substrate. In the absence of ATP, only oligopeptides shorter than five residues are hydrolyzed (such as succinyl-Leu-Tyr-|-NHMec, and Leu-Tyr-Leu-|-Tyr-Trp, in which cleavage of the -Tyr-|-Leu- and -Tyr-|-Trp bonds also occurs).</text>
        <dbReference type="EC" id="3.4.21.92"/>
    </reaction>
</comment>
<comment type="subunit">
    <text evidence="1">Fourteen ClpP subunits assemble into 2 heptameric rings which stack back to back to give a disk-like structure with a central cavity, resembling the structure of eukaryotic proteasomes.</text>
</comment>
<comment type="subcellular location">
    <subcellularLocation>
        <location evidence="1">Cytoplasm</location>
    </subcellularLocation>
</comment>
<comment type="similarity">
    <text evidence="1">Belongs to the peptidase S14 family.</text>
</comment>
<reference key="1">
    <citation type="journal article" date="2015" name="Genome Announc.">
        <title>Complete genome sequence of Anaeromyxobacter sp. Fw109-5, an anaerobic, metal-reducing bacterium isolated from a contaminated subsurface environment.</title>
        <authorList>
            <person name="Hwang C."/>
            <person name="Copeland A."/>
            <person name="Lucas S."/>
            <person name="Lapidus A."/>
            <person name="Barry K."/>
            <person name="Glavina Del Rio T."/>
            <person name="Dalin E."/>
            <person name="Tice H."/>
            <person name="Pitluck S."/>
            <person name="Sims D."/>
            <person name="Brettin T."/>
            <person name="Bruce D.C."/>
            <person name="Detter J.C."/>
            <person name="Han C.S."/>
            <person name="Schmutz J."/>
            <person name="Larimer F.W."/>
            <person name="Land M.L."/>
            <person name="Hauser L.J."/>
            <person name="Kyrpides N."/>
            <person name="Lykidis A."/>
            <person name="Richardson P."/>
            <person name="Belieav A."/>
            <person name="Sanford R.A."/>
            <person name="Loeffler F.E."/>
            <person name="Fields M.W."/>
        </authorList>
    </citation>
    <scope>NUCLEOTIDE SEQUENCE [LARGE SCALE GENOMIC DNA]</scope>
    <source>
        <strain>Fw109-5</strain>
    </source>
</reference>